<dbReference type="EC" id="3.1.26.4" evidence="1"/>
<dbReference type="EMBL" id="AE014299">
    <property type="protein sequence ID" value="AAN54698.1"/>
    <property type="molecule type" value="Genomic_DNA"/>
</dbReference>
<dbReference type="RefSeq" id="NP_717254.1">
    <property type="nucleotide sequence ID" value="NC_004347.2"/>
</dbReference>
<dbReference type="RefSeq" id="WP_011071798.1">
    <property type="nucleotide sequence ID" value="NC_004347.2"/>
</dbReference>
<dbReference type="SMR" id="Q8EGG1"/>
<dbReference type="STRING" id="211586.SO_1643"/>
<dbReference type="PaxDb" id="211586-SO_1643"/>
<dbReference type="KEGG" id="son:SO_1643"/>
<dbReference type="PATRIC" id="fig|211586.12.peg.1582"/>
<dbReference type="eggNOG" id="COG0164">
    <property type="taxonomic scope" value="Bacteria"/>
</dbReference>
<dbReference type="HOGENOM" id="CLU_036532_3_2_6"/>
<dbReference type="OrthoDB" id="9803420at2"/>
<dbReference type="PhylomeDB" id="Q8EGG1"/>
<dbReference type="BioCyc" id="SONE211586:G1GMP-1513-MONOMER"/>
<dbReference type="Proteomes" id="UP000008186">
    <property type="component" value="Chromosome"/>
</dbReference>
<dbReference type="GO" id="GO:0005737">
    <property type="term" value="C:cytoplasm"/>
    <property type="evidence" value="ECO:0007669"/>
    <property type="project" value="UniProtKB-SubCell"/>
</dbReference>
<dbReference type="GO" id="GO:0032299">
    <property type="term" value="C:ribonuclease H2 complex"/>
    <property type="evidence" value="ECO:0000318"/>
    <property type="project" value="GO_Central"/>
</dbReference>
<dbReference type="GO" id="GO:0030145">
    <property type="term" value="F:manganese ion binding"/>
    <property type="evidence" value="ECO:0007669"/>
    <property type="project" value="UniProtKB-UniRule"/>
</dbReference>
<dbReference type="GO" id="GO:0003723">
    <property type="term" value="F:RNA binding"/>
    <property type="evidence" value="ECO:0007669"/>
    <property type="project" value="InterPro"/>
</dbReference>
<dbReference type="GO" id="GO:0004523">
    <property type="term" value="F:RNA-DNA hybrid ribonuclease activity"/>
    <property type="evidence" value="ECO:0000318"/>
    <property type="project" value="GO_Central"/>
</dbReference>
<dbReference type="GO" id="GO:0043137">
    <property type="term" value="P:DNA replication, removal of RNA primer"/>
    <property type="evidence" value="ECO:0000318"/>
    <property type="project" value="GO_Central"/>
</dbReference>
<dbReference type="GO" id="GO:0006298">
    <property type="term" value="P:mismatch repair"/>
    <property type="evidence" value="ECO:0000318"/>
    <property type="project" value="GO_Central"/>
</dbReference>
<dbReference type="CDD" id="cd07182">
    <property type="entry name" value="RNase_HII_bacteria_HII_like"/>
    <property type="match status" value="1"/>
</dbReference>
<dbReference type="FunFam" id="3.30.420.10:FF:000006">
    <property type="entry name" value="Ribonuclease HII"/>
    <property type="match status" value="1"/>
</dbReference>
<dbReference type="Gene3D" id="3.30.420.10">
    <property type="entry name" value="Ribonuclease H-like superfamily/Ribonuclease H"/>
    <property type="match status" value="1"/>
</dbReference>
<dbReference type="HAMAP" id="MF_00052_B">
    <property type="entry name" value="RNase_HII_B"/>
    <property type="match status" value="1"/>
</dbReference>
<dbReference type="InterPro" id="IPR022898">
    <property type="entry name" value="RNase_HII"/>
</dbReference>
<dbReference type="InterPro" id="IPR001352">
    <property type="entry name" value="RNase_HII/HIII"/>
</dbReference>
<dbReference type="InterPro" id="IPR024567">
    <property type="entry name" value="RNase_HII/HIII_dom"/>
</dbReference>
<dbReference type="InterPro" id="IPR012337">
    <property type="entry name" value="RNaseH-like_sf"/>
</dbReference>
<dbReference type="InterPro" id="IPR036397">
    <property type="entry name" value="RNaseH_sf"/>
</dbReference>
<dbReference type="NCBIfam" id="NF000594">
    <property type="entry name" value="PRK00015.1-1"/>
    <property type="match status" value="1"/>
</dbReference>
<dbReference type="NCBIfam" id="NF000595">
    <property type="entry name" value="PRK00015.1-3"/>
    <property type="match status" value="1"/>
</dbReference>
<dbReference type="NCBIfam" id="NF000596">
    <property type="entry name" value="PRK00015.1-4"/>
    <property type="match status" value="1"/>
</dbReference>
<dbReference type="PANTHER" id="PTHR10954">
    <property type="entry name" value="RIBONUCLEASE H2 SUBUNIT A"/>
    <property type="match status" value="1"/>
</dbReference>
<dbReference type="PANTHER" id="PTHR10954:SF18">
    <property type="entry name" value="RIBONUCLEASE HII"/>
    <property type="match status" value="1"/>
</dbReference>
<dbReference type="Pfam" id="PF01351">
    <property type="entry name" value="RNase_HII"/>
    <property type="match status" value="1"/>
</dbReference>
<dbReference type="SUPFAM" id="SSF53098">
    <property type="entry name" value="Ribonuclease H-like"/>
    <property type="match status" value="1"/>
</dbReference>
<dbReference type="PROSITE" id="PS51975">
    <property type="entry name" value="RNASE_H_2"/>
    <property type="match status" value="1"/>
</dbReference>
<protein>
    <recommendedName>
        <fullName evidence="1">Ribonuclease HII</fullName>
        <shortName evidence="1">RNase HII</shortName>
        <ecNumber evidence="1">3.1.26.4</ecNumber>
    </recommendedName>
</protein>
<organism>
    <name type="scientific">Shewanella oneidensis (strain ATCC 700550 / JCM 31522 / CIP 106686 / LMG 19005 / NCIMB 14063 / MR-1)</name>
    <dbReference type="NCBI Taxonomy" id="211586"/>
    <lineage>
        <taxon>Bacteria</taxon>
        <taxon>Pseudomonadati</taxon>
        <taxon>Pseudomonadota</taxon>
        <taxon>Gammaproteobacteria</taxon>
        <taxon>Alteromonadales</taxon>
        <taxon>Shewanellaceae</taxon>
        <taxon>Shewanella</taxon>
    </lineage>
</organism>
<name>RNH2_SHEON</name>
<proteinExistence type="inferred from homology"/>
<gene>
    <name evidence="1" type="primary">rnhB</name>
    <name type="ordered locus">SO_1643</name>
</gene>
<reference key="1">
    <citation type="journal article" date="2002" name="Nat. Biotechnol.">
        <title>Genome sequence of the dissimilatory metal ion-reducing bacterium Shewanella oneidensis.</title>
        <authorList>
            <person name="Heidelberg J.F."/>
            <person name="Paulsen I.T."/>
            <person name="Nelson K.E."/>
            <person name="Gaidos E.J."/>
            <person name="Nelson W.C."/>
            <person name="Read T.D."/>
            <person name="Eisen J.A."/>
            <person name="Seshadri R."/>
            <person name="Ward N.L."/>
            <person name="Methe B.A."/>
            <person name="Clayton R.A."/>
            <person name="Meyer T."/>
            <person name="Tsapin A."/>
            <person name="Scott J."/>
            <person name="Beanan M.J."/>
            <person name="Brinkac L.M."/>
            <person name="Daugherty S.C."/>
            <person name="DeBoy R.T."/>
            <person name="Dodson R.J."/>
            <person name="Durkin A.S."/>
            <person name="Haft D.H."/>
            <person name="Kolonay J.F."/>
            <person name="Madupu R."/>
            <person name="Peterson J.D."/>
            <person name="Umayam L.A."/>
            <person name="White O."/>
            <person name="Wolf A.M."/>
            <person name="Vamathevan J.J."/>
            <person name="Weidman J.F."/>
            <person name="Impraim M."/>
            <person name="Lee K."/>
            <person name="Berry K.J."/>
            <person name="Lee C."/>
            <person name="Mueller J."/>
            <person name="Khouri H.M."/>
            <person name="Gill J."/>
            <person name="Utterback T.R."/>
            <person name="McDonald L.A."/>
            <person name="Feldblyum T.V."/>
            <person name="Smith H.O."/>
            <person name="Venter J.C."/>
            <person name="Nealson K.H."/>
            <person name="Fraser C.M."/>
        </authorList>
    </citation>
    <scope>NUCLEOTIDE SEQUENCE [LARGE SCALE GENOMIC DNA]</scope>
    <source>
        <strain>ATCC 700550 / JCM 31522 / CIP 106686 / LMG 19005 / NCIMB 14063 / MR-1</strain>
    </source>
</reference>
<keyword id="KW-0963">Cytoplasm</keyword>
<keyword id="KW-0255">Endonuclease</keyword>
<keyword id="KW-0378">Hydrolase</keyword>
<keyword id="KW-0464">Manganese</keyword>
<keyword id="KW-0479">Metal-binding</keyword>
<keyword id="KW-0540">Nuclease</keyword>
<keyword id="KW-1185">Reference proteome</keyword>
<sequence>MAVFKTLTDADIAMFSTSLVAGVDEVGRGPLVGDVVTAAVILDPNRPILGLNDSKKLTEKRREALFDEICEKALSFHVGRASPAEIDELNILHATMLAMQRAVSGLKLTPALVLVDGNRSPAFTHQGLSLASHSIIKGDGLIASISAASIIAKVTRDREMDALDAAYPQYGFAKHKGYPTKAHFEAIAEHGVFDQYRKSFKPVKALLER</sequence>
<accession>Q8EGG1</accession>
<comment type="function">
    <text evidence="1">Endonuclease that specifically degrades the RNA of RNA-DNA hybrids.</text>
</comment>
<comment type="catalytic activity">
    <reaction evidence="1">
        <text>Endonucleolytic cleavage to 5'-phosphomonoester.</text>
        <dbReference type="EC" id="3.1.26.4"/>
    </reaction>
</comment>
<comment type="cofactor">
    <cofactor evidence="1">
        <name>Mn(2+)</name>
        <dbReference type="ChEBI" id="CHEBI:29035"/>
    </cofactor>
    <cofactor evidence="1">
        <name>Mg(2+)</name>
        <dbReference type="ChEBI" id="CHEBI:18420"/>
    </cofactor>
    <text evidence="1">Manganese or magnesium. Binds 1 divalent metal ion per monomer in the absence of substrate. May bind a second metal ion after substrate binding.</text>
</comment>
<comment type="subcellular location">
    <subcellularLocation>
        <location evidence="1">Cytoplasm</location>
    </subcellularLocation>
</comment>
<comment type="similarity">
    <text evidence="1">Belongs to the RNase HII family.</text>
</comment>
<feature type="chain" id="PRO_0000111619" description="Ribonuclease HII">
    <location>
        <begin position="1"/>
        <end position="209"/>
    </location>
</feature>
<feature type="domain" description="RNase H type-2" evidence="2">
    <location>
        <begin position="18"/>
        <end position="209"/>
    </location>
</feature>
<feature type="binding site" evidence="1">
    <location>
        <position position="24"/>
    </location>
    <ligand>
        <name>a divalent metal cation</name>
        <dbReference type="ChEBI" id="CHEBI:60240"/>
    </ligand>
</feature>
<feature type="binding site" evidence="1">
    <location>
        <position position="25"/>
    </location>
    <ligand>
        <name>a divalent metal cation</name>
        <dbReference type="ChEBI" id="CHEBI:60240"/>
    </ligand>
</feature>
<feature type="binding site" evidence="1">
    <location>
        <position position="116"/>
    </location>
    <ligand>
        <name>a divalent metal cation</name>
        <dbReference type="ChEBI" id="CHEBI:60240"/>
    </ligand>
</feature>
<evidence type="ECO:0000255" key="1">
    <source>
        <dbReference type="HAMAP-Rule" id="MF_00052"/>
    </source>
</evidence>
<evidence type="ECO:0000255" key="2">
    <source>
        <dbReference type="PROSITE-ProRule" id="PRU01319"/>
    </source>
</evidence>